<organism>
    <name type="scientific">Hahella chejuensis (strain KCTC 2396)</name>
    <dbReference type="NCBI Taxonomy" id="349521"/>
    <lineage>
        <taxon>Bacteria</taxon>
        <taxon>Pseudomonadati</taxon>
        <taxon>Pseudomonadota</taxon>
        <taxon>Gammaproteobacteria</taxon>
        <taxon>Oceanospirillales</taxon>
        <taxon>Hahellaceae</taxon>
        <taxon>Hahella</taxon>
    </lineage>
</organism>
<feature type="chain" id="PRO_0000268774" description="Glucokinase">
    <location>
        <begin position="1"/>
        <end position="322"/>
    </location>
</feature>
<feature type="binding site" evidence="1">
    <location>
        <begin position="10"/>
        <end position="15"/>
    </location>
    <ligand>
        <name>ATP</name>
        <dbReference type="ChEBI" id="CHEBI:30616"/>
    </ligand>
</feature>
<comment type="catalytic activity">
    <reaction evidence="1">
        <text>D-glucose + ATP = D-glucose 6-phosphate + ADP + H(+)</text>
        <dbReference type="Rhea" id="RHEA:17825"/>
        <dbReference type="ChEBI" id="CHEBI:4167"/>
        <dbReference type="ChEBI" id="CHEBI:15378"/>
        <dbReference type="ChEBI" id="CHEBI:30616"/>
        <dbReference type="ChEBI" id="CHEBI:61548"/>
        <dbReference type="ChEBI" id="CHEBI:456216"/>
        <dbReference type="EC" id="2.7.1.2"/>
    </reaction>
</comment>
<comment type="subcellular location">
    <subcellularLocation>
        <location evidence="1">Cytoplasm</location>
    </subcellularLocation>
</comment>
<comment type="similarity">
    <text evidence="1">Belongs to the bacterial glucokinase family.</text>
</comment>
<evidence type="ECO:0000255" key="1">
    <source>
        <dbReference type="HAMAP-Rule" id="MF_00524"/>
    </source>
</evidence>
<proteinExistence type="inferred from homology"/>
<protein>
    <recommendedName>
        <fullName evidence="1">Glucokinase</fullName>
        <ecNumber evidence="1">2.7.1.2</ecNumber>
    </recommendedName>
    <alternativeName>
        <fullName evidence="1">Glucose kinase</fullName>
    </alternativeName>
</protein>
<name>GLK_HAHCH</name>
<dbReference type="EC" id="2.7.1.2" evidence="1"/>
<dbReference type="EMBL" id="CP000155">
    <property type="protein sequence ID" value="ABC27344.1"/>
    <property type="molecule type" value="Genomic_DNA"/>
</dbReference>
<dbReference type="RefSeq" id="WP_011394421.1">
    <property type="nucleotide sequence ID" value="NC_007645.1"/>
</dbReference>
<dbReference type="SMR" id="Q2SPT0"/>
<dbReference type="STRING" id="349521.HCH_00434"/>
<dbReference type="KEGG" id="hch:HCH_00434"/>
<dbReference type="eggNOG" id="COG0837">
    <property type="taxonomic scope" value="Bacteria"/>
</dbReference>
<dbReference type="HOGENOM" id="CLU_042582_1_0_6"/>
<dbReference type="OrthoDB" id="9800595at2"/>
<dbReference type="Proteomes" id="UP000000238">
    <property type="component" value="Chromosome"/>
</dbReference>
<dbReference type="GO" id="GO:0005829">
    <property type="term" value="C:cytosol"/>
    <property type="evidence" value="ECO:0007669"/>
    <property type="project" value="TreeGrafter"/>
</dbReference>
<dbReference type="GO" id="GO:0005524">
    <property type="term" value="F:ATP binding"/>
    <property type="evidence" value="ECO:0007669"/>
    <property type="project" value="UniProtKB-UniRule"/>
</dbReference>
<dbReference type="GO" id="GO:0005536">
    <property type="term" value="F:D-glucose binding"/>
    <property type="evidence" value="ECO:0007669"/>
    <property type="project" value="InterPro"/>
</dbReference>
<dbReference type="GO" id="GO:0004340">
    <property type="term" value="F:glucokinase activity"/>
    <property type="evidence" value="ECO:0007669"/>
    <property type="project" value="UniProtKB-UniRule"/>
</dbReference>
<dbReference type="GO" id="GO:0006096">
    <property type="term" value="P:glycolytic process"/>
    <property type="evidence" value="ECO:0007669"/>
    <property type="project" value="UniProtKB-UniRule"/>
</dbReference>
<dbReference type="CDD" id="cd24008">
    <property type="entry name" value="ASKHA_NBD_GLK"/>
    <property type="match status" value="1"/>
</dbReference>
<dbReference type="FunFam" id="3.40.367.20:FF:000002">
    <property type="entry name" value="Glucokinase"/>
    <property type="match status" value="1"/>
</dbReference>
<dbReference type="Gene3D" id="3.30.420.40">
    <property type="match status" value="1"/>
</dbReference>
<dbReference type="Gene3D" id="3.40.367.20">
    <property type="match status" value="1"/>
</dbReference>
<dbReference type="HAMAP" id="MF_00524">
    <property type="entry name" value="Glucokinase"/>
    <property type="match status" value="1"/>
</dbReference>
<dbReference type="InterPro" id="IPR043129">
    <property type="entry name" value="ATPase_NBD"/>
</dbReference>
<dbReference type="InterPro" id="IPR050201">
    <property type="entry name" value="Bacterial_glucokinase"/>
</dbReference>
<dbReference type="InterPro" id="IPR003836">
    <property type="entry name" value="Glucokinase"/>
</dbReference>
<dbReference type="NCBIfam" id="TIGR00749">
    <property type="entry name" value="glk"/>
    <property type="match status" value="1"/>
</dbReference>
<dbReference type="NCBIfam" id="NF001415">
    <property type="entry name" value="PRK00292.1-2"/>
    <property type="match status" value="1"/>
</dbReference>
<dbReference type="NCBIfam" id="NF001416">
    <property type="entry name" value="PRK00292.1-3"/>
    <property type="match status" value="1"/>
</dbReference>
<dbReference type="NCBIfam" id="NF009073">
    <property type="entry name" value="PRK12408.1"/>
    <property type="match status" value="1"/>
</dbReference>
<dbReference type="PANTHER" id="PTHR47690">
    <property type="entry name" value="GLUCOKINASE"/>
    <property type="match status" value="1"/>
</dbReference>
<dbReference type="PANTHER" id="PTHR47690:SF1">
    <property type="entry name" value="GLUCOKINASE"/>
    <property type="match status" value="1"/>
</dbReference>
<dbReference type="Pfam" id="PF02685">
    <property type="entry name" value="Glucokinase"/>
    <property type="match status" value="1"/>
</dbReference>
<dbReference type="SUPFAM" id="SSF53067">
    <property type="entry name" value="Actin-like ATPase domain"/>
    <property type="match status" value="1"/>
</dbReference>
<sequence length="322" mass="35028">MSKAQYALVGDIGGTNARFALVARDSFELEHIQVLPCNDYANLDEAVRDYLAHHPEAEVHEACMAFACPVHGDTIKMTNNHWTFNKADMQARLGFDTFKYVNDFTAMALGTLHVADERLQKVGGGEGKDGAARLVIGPGTGLGVSGLVRTMTDWAPLSTEGGHVDFAPTDEVEISVLRILKERFGRVSVERILCGEGLLNLYRSLCEIDGVEPAHTQPSQVTEAALANSDVIAHKTLKLFCAIFGRVTGNAALTLGALGGVYVCGGIIPRFIEFFRDSDFRQCFEDKGRMRDYLGGIPVYVVTETYTGLLGAAEALKNQEVH</sequence>
<accession>Q2SPT0</accession>
<keyword id="KW-0067">ATP-binding</keyword>
<keyword id="KW-0963">Cytoplasm</keyword>
<keyword id="KW-0324">Glycolysis</keyword>
<keyword id="KW-0418">Kinase</keyword>
<keyword id="KW-0547">Nucleotide-binding</keyword>
<keyword id="KW-1185">Reference proteome</keyword>
<keyword id="KW-0808">Transferase</keyword>
<reference key="1">
    <citation type="journal article" date="2005" name="Nucleic Acids Res.">
        <title>Genomic blueprint of Hahella chejuensis, a marine microbe producing an algicidal agent.</title>
        <authorList>
            <person name="Jeong H."/>
            <person name="Yim J.H."/>
            <person name="Lee C."/>
            <person name="Choi S.-H."/>
            <person name="Park Y.K."/>
            <person name="Yoon S.H."/>
            <person name="Hur C.-G."/>
            <person name="Kang H.-Y."/>
            <person name="Kim D."/>
            <person name="Lee H.H."/>
            <person name="Park K.H."/>
            <person name="Park S.-H."/>
            <person name="Park H.-S."/>
            <person name="Lee H.K."/>
            <person name="Oh T.K."/>
            <person name="Kim J.F."/>
        </authorList>
    </citation>
    <scope>NUCLEOTIDE SEQUENCE [LARGE SCALE GENOMIC DNA]</scope>
    <source>
        <strain>KCTC 2396</strain>
    </source>
</reference>
<gene>
    <name evidence="1" type="primary">glk</name>
    <name type="ordered locus">HCH_00434</name>
</gene>